<sequence length="398" mass="44097">MVRKVAEQNLQKNNENDRELSKNVYLLGFTSFLNDMSSEMIMPILPMLITSVGGGSLSIGLVGGLREFISNILMVLIGYCSDKVRKRKIFVVLGYLTSSMFKLLLGLSKSWLGAVIFSSLERMGKGIRTAPRDAIISESMPKTLGKGFGIQRAFDTAGAILGSTLSLLFILYLQYSFNQIILIAAVIGFLTLIPLYFVKEKPSPSNNKITFRVGIKNLPKELKLFILISAIFTLSNFSYMFYILRAQEFLMIVDEKMAIIIPIALYILYNIFYATFSIPFGILSDKIGRKSVLTIGYIVYGIVSLGFAYFISQKSLILLFALYGIAYALFAGNQKAYVSDLSSEDIRATALGLFYTVVGLTSLPASLIAGYLWKISPEMTFLYGSVLAIISGLLLLFI</sequence>
<proteinExistence type="inferred from homology"/>
<gene>
    <name type="ordered locus">MJ1317</name>
</gene>
<reference key="1">
    <citation type="journal article" date="1996" name="Science">
        <title>Complete genome sequence of the methanogenic archaeon, Methanococcus jannaschii.</title>
        <authorList>
            <person name="Bult C.J."/>
            <person name="White O."/>
            <person name="Olsen G.J."/>
            <person name="Zhou L."/>
            <person name="Fleischmann R.D."/>
            <person name="Sutton G.G."/>
            <person name="Blake J.A."/>
            <person name="FitzGerald L.M."/>
            <person name="Clayton R.A."/>
            <person name="Gocayne J.D."/>
            <person name="Kerlavage A.R."/>
            <person name="Dougherty B.A."/>
            <person name="Tomb J.-F."/>
            <person name="Adams M.D."/>
            <person name="Reich C.I."/>
            <person name="Overbeek R."/>
            <person name="Kirkness E.F."/>
            <person name="Weinstock K.G."/>
            <person name="Merrick J.M."/>
            <person name="Glodek A."/>
            <person name="Scott J.L."/>
            <person name="Geoghagen N.S.M."/>
            <person name="Weidman J.F."/>
            <person name="Fuhrmann J.L."/>
            <person name="Nguyen D."/>
            <person name="Utterback T.R."/>
            <person name="Kelley J.M."/>
            <person name="Peterson J.D."/>
            <person name="Sadow P.W."/>
            <person name="Hanna M.C."/>
            <person name="Cotton M.D."/>
            <person name="Roberts K.M."/>
            <person name="Hurst M.A."/>
            <person name="Kaine B.P."/>
            <person name="Borodovsky M."/>
            <person name="Klenk H.-P."/>
            <person name="Fraser C.M."/>
            <person name="Smith H.O."/>
            <person name="Woese C.R."/>
            <person name="Venter J.C."/>
        </authorList>
    </citation>
    <scope>NUCLEOTIDE SEQUENCE [LARGE SCALE GENOMIC DNA]</scope>
    <source>
        <strain>ATCC 43067 / DSM 2661 / JAL-1 / JCM 10045 / NBRC 100440</strain>
    </source>
</reference>
<name>Y1317_METJA</name>
<organism>
    <name type="scientific">Methanocaldococcus jannaschii (strain ATCC 43067 / DSM 2661 / JAL-1 / JCM 10045 / NBRC 100440)</name>
    <name type="common">Methanococcus jannaschii</name>
    <dbReference type="NCBI Taxonomy" id="243232"/>
    <lineage>
        <taxon>Archaea</taxon>
        <taxon>Methanobacteriati</taxon>
        <taxon>Methanobacteriota</taxon>
        <taxon>Methanomada group</taxon>
        <taxon>Methanococci</taxon>
        <taxon>Methanococcales</taxon>
        <taxon>Methanocaldococcaceae</taxon>
        <taxon>Methanocaldococcus</taxon>
    </lineage>
</organism>
<comment type="subcellular location">
    <subcellularLocation>
        <location evidence="2">Cell membrane</location>
        <topology evidence="2">Multi-pass membrane protein</topology>
    </subcellularLocation>
</comment>
<comment type="similarity">
    <text evidence="2">Belongs to the major facilitator superfamily.</text>
</comment>
<protein>
    <recommendedName>
        <fullName>Uncharacterized MFS-type transporter MJ1317</fullName>
    </recommendedName>
</protein>
<feature type="chain" id="PRO_0000084886" description="Uncharacterized MFS-type transporter MJ1317">
    <location>
        <begin position="1"/>
        <end position="398"/>
    </location>
</feature>
<feature type="transmembrane region" description="Helical" evidence="1">
    <location>
        <begin position="43"/>
        <end position="65"/>
    </location>
</feature>
<feature type="transmembrane region" description="Helical" evidence="1">
    <location>
        <begin position="89"/>
        <end position="108"/>
    </location>
</feature>
<feature type="transmembrane region" description="Helical" evidence="1">
    <location>
        <begin position="156"/>
        <end position="173"/>
    </location>
</feature>
<feature type="transmembrane region" description="Helical" evidence="1">
    <location>
        <begin position="180"/>
        <end position="198"/>
    </location>
</feature>
<feature type="transmembrane region" description="Helical" evidence="1">
    <location>
        <begin position="224"/>
        <end position="246"/>
    </location>
</feature>
<feature type="transmembrane region" description="Helical" evidence="1">
    <location>
        <begin position="259"/>
        <end position="281"/>
    </location>
</feature>
<feature type="transmembrane region" description="Helical" evidence="1">
    <location>
        <begin position="291"/>
        <end position="311"/>
    </location>
</feature>
<feature type="transmembrane region" description="Helical" evidence="1">
    <location>
        <begin position="316"/>
        <end position="338"/>
    </location>
</feature>
<feature type="transmembrane region" description="Helical" evidence="1">
    <location>
        <begin position="351"/>
        <end position="373"/>
    </location>
</feature>
<feature type="transmembrane region" description="Helical" evidence="1">
    <location>
        <begin position="380"/>
        <end position="397"/>
    </location>
</feature>
<evidence type="ECO:0000255" key="1"/>
<evidence type="ECO:0000305" key="2"/>
<dbReference type="EMBL" id="L77117">
    <property type="protein sequence ID" value="AAB99324.1"/>
    <property type="molecule type" value="Genomic_DNA"/>
</dbReference>
<dbReference type="PIR" id="D64464">
    <property type="entry name" value="D64464"/>
</dbReference>
<dbReference type="RefSeq" id="WP_010870834.1">
    <property type="nucleotide sequence ID" value="NC_000909.1"/>
</dbReference>
<dbReference type="SMR" id="Q58713"/>
<dbReference type="FunCoup" id="Q58713">
    <property type="interactions" value="5"/>
</dbReference>
<dbReference type="STRING" id="243232.MJ_1317"/>
<dbReference type="PaxDb" id="243232-MJ_1317"/>
<dbReference type="EnsemblBacteria" id="AAB99324">
    <property type="protein sequence ID" value="AAB99324"/>
    <property type="gene ID" value="MJ_1317"/>
</dbReference>
<dbReference type="GeneID" id="1452219"/>
<dbReference type="KEGG" id="mja:MJ_1317"/>
<dbReference type="eggNOG" id="arCOG00130">
    <property type="taxonomic scope" value="Archaea"/>
</dbReference>
<dbReference type="HOGENOM" id="CLU_040020_1_0_2"/>
<dbReference type="InParanoid" id="Q58713"/>
<dbReference type="OrthoDB" id="117970at2157"/>
<dbReference type="PhylomeDB" id="Q58713"/>
<dbReference type="Proteomes" id="UP000000805">
    <property type="component" value="Chromosome"/>
</dbReference>
<dbReference type="GO" id="GO:0005886">
    <property type="term" value="C:plasma membrane"/>
    <property type="evidence" value="ECO:0007669"/>
    <property type="project" value="UniProtKB-SubCell"/>
</dbReference>
<dbReference type="GO" id="GO:0022857">
    <property type="term" value="F:transmembrane transporter activity"/>
    <property type="evidence" value="ECO:0007669"/>
    <property type="project" value="InterPro"/>
</dbReference>
<dbReference type="CDD" id="cd17370">
    <property type="entry name" value="MFS_MJ1317_like"/>
    <property type="match status" value="1"/>
</dbReference>
<dbReference type="Gene3D" id="1.20.1250.20">
    <property type="entry name" value="MFS general substrate transporter like domains"/>
    <property type="match status" value="2"/>
</dbReference>
<dbReference type="InterPro" id="IPR011701">
    <property type="entry name" value="MFS"/>
</dbReference>
<dbReference type="InterPro" id="IPR020846">
    <property type="entry name" value="MFS_dom"/>
</dbReference>
<dbReference type="InterPro" id="IPR036259">
    <property type="entry name" value="MFS_trans_sf"/>
</dbReference>
<dbReference type="PANTHER" id="PTHR23518">
    <property type="entry name" value="C-METHYLTRANSFERASE"/>
    <property type="match status" value="1"/>
</dbReference>
<dbReference type="PANTHER" id="PTHR23518:SF2">
    <property type="entry name" value="MAJOR FACILITATOR SUPERFAMILY TRANSPORTER"/>
    <property type="match status" value="1"/>
</dbReference>
<dbReference type="Pfam" id="PF07690">
    <property type="entry name" value="MFS_1"/>
    <property type="match status" value="2"/>
</dbReference>
<dbReference type="SUPFAM" id="SSF103473">
    <property type="entry name" value="MFS general substrate transporter"/>
    <property type="match status" value="1"/>
</dbReference>
<dbReference type="PROSITE" id="PS50850">
    <property type="entry name" value="MFS"/>
    <property type="match status" value="1"/>
</dbReference>
<accession>Q58713</accession>
<keyword id="KW-1003">Cell membrane</keyword>
<keyword id="KW-0472">Membrane</keyword>
<keyword id="KW-1185">Reference proteome</keyword>
<keyword id="KW-0812">Transmembrane</keyword>
<keyword id="KW-1133">Transmembrane helix</keyword>
<keyword id="KW-0813">Transport</keyword>